<reference key="1">
    <citation type="journal article" date="2001" name="Nature">
        <title>Genome sequence of enterohaemorrhagic Escherichia coli O157:H7.</title>
        <authorList>
            <person name="Perna N.T."/>
            <person name="Plunkett G. III"/>
            <person name="Burland V."/>
            <person name="Mau B."/>
            <person name="Glasner J.D."/>
            <person name="Rose D.J."/>
            <person name="Mayhew G.F."/>
            <person name="Evans P.S."/>
            <person name="Gregor J."/>
            <person name="Kirkpatrick H.A."/>
            <person name="Posfai G."/>
            <person name="Hackett J."/>
            <person name="Klink S."/>
            <person name="Boutin A."/>
            <person name="Shao Y."/>
            <person name="Miller L."/>
            <person name="Grotbeck E.J."/>
            <person name="Davis N.W."/>
            <person name="Lim A."/>
            <person name="Dimalanta E.T."/>
            <person name="Potamousis K."/>
            <person name="Apodaca J."/>
            <person name="Anantharaman T.S."/>
            <person name="Lin J."/>
            <person name="Yen G."/>
            <person name="Schwartz D.C."/>
            <person name="Welch R.A."/>
            <person name="Blattner F.R."/>
        </authorList>
    </citation>
    <scope>NUCLEOTIDE SEQUENCE [LARGE SCALE GENOMIC DNA]</scope>
    <source>
        <strain>O157:H7 / EDL933 / ATCC 700927 / EHEC</strain>
    </source>
</reference>
<reference key="2">
    <citation type="journal article" date="2001" name="DNA Res.">
        <title>Complete genome sequence of enterohemorrhagic Escherichia coli O157:H7 and genomic comparison with a laboratory strain K-12.</title>
        <authorList>
            <person name="Hayashi T."/>
            <person name="Makino K."/>
            <person name="Ohnishi M."/>
            <person name="Kurokawa K."/>
            <person name="Ishii K."/>
            <person name="Yokoyama K."/>
            <person name="Han C.-G."/>
            <person name="Ohtsubo E."/>
            <person name="Nakayama K."/>
            <person name="Murata T."/>
            <person name="Tanaka M."/>
            <person name="Tobe T."/>
            <person name="Iida T."/>
            <person name="Takami H."/>
            <person name="Honda T."/>
            <person name="Sasakawa C."/>
            <person name="Ogasawara N."/>
            <person name="Yasunaga T."/>
            <person name="Kuhara S."/>
            <person name="Shiba T."/>
            <person name="Hattori M."/>
            <person name="Shinagawa H."/>
        </authorList>
    </citation>
    <scope>NUCLEOTIDE SEQUENCE [LARGE SCALE GENOMIC DNA]</scope>
    <source>
        <strain>O157:H7 / Sakai / RIMD 0509952 / EHEC</strain>
    </source>
</reference>
<proteinExistence type="inferred from homology"/>
<gene>
    <name type="primary">rpmE2-2</name>
    <name type="ordered locus">Z1152</name>
    <name type="ordered locus">ECs1330</name>
</gene>
<gene>
    <name type="primary">rpmE2-3</name>
    <name type="ordered locus">Z1591</name>
</gene>
<feature type="chain" id="PRO_0000173225" description="Large ribosomal subunit protein bL31B-2/bL31B-3">
    <location>
        <begin position="1"/>
        <end position="87"/>
    </location>
</feature>
<evidence type="ECO:0000250" key="1"/>
<evidence type="ECO:0000255" key="2">
    <source>
        <dbReference type="HAMAP-Rule" id="MF_00502"/>
    </source>
</evidence>
<evidence type="ECO:0000305" key="3"/>
<comment type="subunit">
    <text evidence="1">Part of the 50S ribosomal subunit.</text>
</comment>
<comment type="similarity">
    <text evidence="3">Belongs to the bacterial ribosomal protein bL31 family. Type B subfamily.</text>
</comment>
<comment type="caution">
    <text evidence="3">The third copy of this protein is missing from the Sakai strain.</text>
</comment>
<keyword id="KW-1185">Reference proteome</keyword>
<keyword id="KW-0687">Ribonucleoprotein</keyword>
<keyword id="KW-0689">Ribosomal protein</keyword>
<organism>
    <name type="scientific">Escherichia coli O157:H7</name>
    <dbReference type="NCBI Taxonomy" id="83334"/>
    <lineage>
        <taxon>Bacteria</taxon>
        <taxon>Pseudomonadati</taxon>
        <taxon>Pseudomonadota</taxon>
        <taxon>Gammaproteobacteria</taxon>
        <taxon>Enterobacterales</taxon>
        <taxon>Enterobacteriaceae</taxon>
        <taxon>Escherichia</taxon>
    </lineage>
</organism>
<name>R31B2_ECO57</name>
<sequence>MKPNIHPEYRTVVFHDTSIDEYFRIGSTIKTDRVIELDGVTYPYVTIDVSSKSHPFYTGKLRTVASEGNVARFTQRFGRFVDAKKGG</sequence>
<protein>
    <recommendedName>
        <fullName evidence="2">Large ribosomal subunit protein bL31B-2/bL31B-3</fullName>
    </recommendedName>
    <alternativeName>
        <fullName evidence="3">50S ribosomal protein L31 type B 2/L31 type B 3</fullName>
    </alternativeName>
</protein>
<dbReference type="EMBL" id="AE005174">
    <property type="protein sequence ID" value="AAG55297.1"/>
    <property type="molecule type" value="Genomic_DNA"/>
</dbReference>
<dbReference type="EMBL" id="AE005174">
    <property type="protein sequence ID" value="AAG55706.1"/>
    <property type="molecule type" value="Genomic_DNA"/>
</dbReference>
<dbReference type="EMBL" id="BA000007">
    <property type="protein sequence ID" value="BAB34753.1"/>
    <property type="molecule type" value="Genomic_DNA"/>
</dbReference>
<dbReference type="PIR" id="B99795">
    <property type="entry name" value="B99795"/>
</dbReference>
<dbReference type="PIR" id="E85604">
    <property type="entry name" value="E85604"/>
</dbReference>
<dbReference type="RefSeq" id="NP_309357.1">
    <property type="nucleotide sequence ID" value="NC_002695.1"/>
</dbReference>
<dbReference type="RefSeq" id="WP_000803992.1">
    <property type="nucleotide sequence ID" value="NZ_VOAI01000029.1"/>
</dbReference>
<dbReference type="SMR" id="Q8X9T8"/>
<dbReference type="STRING" id="155864.Z1152"/>
<dbReference type="KEGG" id="ece:Z1152"/>
<dbReference type="KEGG" id="ece:Z1591"/>
<dbReference type="KEGG" id="ecs:ECs_1330"/>
<dbReference type="PATRIC" id="fig|386585.9.peg.1436"/>
<dbReference type="eggNOG" id="COG0254">
    <property type="taxonomic scope" value="Bacteria"/>
</dbReference>
<dbReference type="HOGENOM" id="CLU_114306_2_1_6"/>
<dbReference type="OMA" id="MQQDKHP"/>
<dbReference type="Proteomes" id="UP000000558">
    <property type="component" value="Chromosome"/>
</dbReference>
<dbReference type="Proteomes" id="UP000002519">
    <property type="component" value="Chromosome"/>
</dbReference>
<dbReference type="GO" id="GO:1990904">
    <property type="term" value="C:ribonucleoprotein complex"/>
    <property type="evidence" value="ECO:0007669"/>
    <property type="project" value="UniProtKB-KW"/>
</dbReference>
<dbReference type="GO" id="GO:0005840">
    <property type="term" value="C:ribosome"/>
    <property type="evidence" value="ECO:0007669"/>
    <property type="project" value="UniProtKB-KW"/>
</dbReference>
<dbReference type="GO" id="GO:0003735">
    <property type="term" value="F:structural constituent of ribosome"/>
    <property type="evidence" value="ECO:0007669"/>
    <property type="project" value="InterPro"/>
</dbReference>
<dbReference type="GO" id="GO:0006412">
    <property type="term" value="P:translation"/>
    <property type="evidence" value="ECO:0007669"/>
    <property type="project" value="UniProtKB-UniRule"/>
</dbReference>
<dbReference type="FunFam" id="4.10.830.30:FF:000002">
    <property type="entry name" value="50S ribosomal protein L31 type B"/>
    <property type="match status" value="1"/>
</dbReference>
<dbReference type="Gene3D" id="4.10.830.30">
    <property type="entry name" value="Ribosomal protein L31"/>
    <property type="match status" value="1"/>
</dbReference>
<dbReference type="HAMAP" id="MF_00502">
    <property type="entry name" value="Ribosomal_bL31_2"/>
    <property type="match status" value="1"/>
</dbReference>
<dbReference type="InterPro" id="IPR034704">
    <property type="entry name" value="Ribosomal_bL28/bL31-like_sf"/>
</dbReference>
<dbReference type="InterPro" id="IPR002150">
    <property type="entry name" value="Ribosomal_bL31"/>
</dbReference>
<dbReference type="InterPro" id="IPR027493">
    <property type="entry name" value="Ribosomal_bL31_B"/>
</dbReference>
<dbReference type="InterPro" id="IPR042105">
    <property type="entry name" value="Ribosomal_bL31_sf"/>
</dbReference>
<dbReference type="NCBIfam" id="TIGR00105">
    <property type="entry name" value="L31"/>
    <property type="match status" value="1"/>
</dbReference>
<dbReference type="NCBIfam" id="NF002462">
    <property type="entry name" value="PRK01678.1"/>
    <property type="match status" value="1"/>
</dbReference>
<dbReference type="PANTHER" id="PTHR33280">
    <property type="entry name" value="50S RIBOSOMAL PROTEIN L31, CHLOROPLASTIC"/>
    <property type="match status" value="1"/>
</dbReference>
<dbReference type="PANTHER" id="PTHR33280:SF1">
    <property type="entry name" value="LARGE RIBOSOMAL SUBUNIT PROTEIN BL31C"/>
    <property type="match status" value="1"/>
</dbReference>
<dbReference type="Pfam" id="PF01197">
    <property type="entry name" value="Ribosomal_L31"/>
    <property type="match status" value="1"/>
</dbReference>
<dbReference type="PRINTS" id="PR01249">
    <property type="entry name" value="RIBOSOMALL31"/>
</dbReference>
<dbReference type="SUPFAM" id="SSF143800">
    <property type="entry name" value="L28p-like"/>
    <property type="match status" value="1"/>
</dbReference>
<dbReference type="PROSITE" id="PS01143">
    <property type="entry name" value="RIBOSOMAL_L31"/>
    <property type="match status" value="1"/>
</dbReference>
<accession>Q8X9T8</accession>